<protein>
    <recommendedName>
        <fullName evidence="11">Meiotic recombination protein DMC1/LIM15 homolog</fullName>
    </recommendedName>
</protein>
<feature type="chain" id="PRO_0000122919" description="Meiotic recombination protein DMC1/LIM15 homolog">
    <location>
        <begin position="1"/>
        <end position="340"/>
    </location>
</feature>
<feature type="binding site" evidence="11">
    <location>
        <begin position="126"/>
        <end position="133"/>
    </location>
    <ligand>
        <name>ATP</name>
        <dbReference type="ChEBI" id="CHEBI:30616"/>
    </ligand>
</feature>
<feature type="binding site" evidence="1">
    <location>
        <position position="230"/>
    </location>
    <ligand>
        <name>dsDNA</name>
        <dbReference type="ChEBI" id="CHEBI:4705"/>
    </ligand>
</feature>
<feature type="binding site" evidence="1">
    <location>
        <position position="230"/>
    </location>
    <ligand>
        <name>ssDNA</name>
        <dbReference type="ChEBI" id="CHEBI:9160"/>
    </ligand>
</feature>
<feature type="binding site" evidence="1">
    <location>
        <position position="233"/>
    </location>
    <ligand>
        <name>ssDNA</name>
        <dbReference type="ChEBI" id="CHEBI:9160"/>
    </ligand>
</feature>
<feature type="binding site" evidence="1">
    <location>
        <position position="236"/>
    </location>
    <ligand>
        <name>dsDNA</name>
        <dbReference type="ChEBI" id="CHEBI:4705"/>
    </ligand>
</feature>
<feature type="binding site" evidence="1">
    <location>
        <position position="236"/>
    </location>
    <ligand>
        <name>ssDNA</name>
        <dbReference type="ChEBI" id="CHEBI:9160"/>
    </ligand>
</feature>
<feature type="binding site" evidence="1">
    <location>
        <position position="242"/>
    </location>
    <ligand>
        <name>dsDNA</name>
        <dbReference type="ChEBI" id="CHEBI:4705"/>
    </ligand>
</feature>
<feature type="binding site" evidence="1">
    <location>
        <position position="242"/>
    </location>
    <ligand>
        <name>ssDNA</name>
        <dbReference type="ChEBI" id="CHEBI:9160"/>
    </ligand>
</feature>
<feature type="binding site" evidence="1">
    <location>
        <position position="311"/>
    </location>
    <ligand>
        <name>ssDNA</name>
        <dbReference type="ChEBI" id="CHEBI:9160"/>
    </ligand>
</feature>
<comment type="function">
    <text evidence="3">Participates in meiotic recombination, specifically in homologous strand assimilation, which is required for the resolution of meiotic double-strand breaks.</text>
</comment>
<comment type="subunit">
    <text evidence="1 2">Double stacked ring-shaped homooctamer (By similarity). Interacts with BRCA2 (By similarity). Interacts with the MND1-PSMC3IP heterodimer (PubMed:15834424). Interacts with RAD51AP1; the interaction is direct and stimulates DMC1-mediated homologous recombination (By similarity).</text>
</comment>
<comment type="subcellular location">
    <subcellularLocation>
        <location evidence="4">Nucleus</location>
    </subcellularLocation>
    <subcellularLocation>
        <location evidence="4 5 6 7 8 9">Chromosome</location>
    </subcellularLocation>
</comment>
<comment type="tissue specificity">
    <text evidence="7 10">Testis.</text>
</comment>
<comment type="developmental stage">
    <text evidence="7">In spermatocytes, shows punctate localization along chromosome axes specifically in early meiotic prophase I cells. Foci start to appear from the leptotene stage, reach their greatest number in the zygotene stage, in the early pachytene stage, the DMC1 foci mostly disappeared from autosomes and became restricted to the sex chromosomes.</text>
</comment>
<comment type="similarity">
    <text evidence="11">Belongs to the RecA family. DMC1 subfamily.</text>
</comment>
<dbReference type="EMBL" id="D58419">
    <property type="protein sequence ID" value="BAA09590.1"/>
    <property type="molecule type" value="mRNA"/>
</dbReference>
<dbReference type="EMBL" id="D64107">
    <property type="protein sequence ID" value="BAA10969.1"/>
    <property type="molecule type" value="mRNA"/>
</dbReference>
<dbReference type="CCDS" id="CCDS27644.1"/>
<dbReference type="PIR" id="JC4191">
    <property type="entry name" value="JC4191"/>
</dbReference>
<dbReference type="RefSeq" id="NP_034189.1">
    <property type="nucleotide sequence ID" value="NM_010059.3"/>
</dbReference>
<dbReference type="SMR" id="Q61880"/>
<dbReference type="BioGRID" id="199244">
    <property type="interactions" value="1"/>
</dbReference>
<dbReference type="CORUM" id="Q61880"/>
<dbReference type="FunCoup" id="Q61880">
    <property type="interactions" value="225"/>
</dbReference>
<dbReference type="STRING" id="10090.ENSMUSP00000023065"/>
<dbReference type="iPTMnet" id="Q61880"/>
<dbReference type="PhosphoSitePlus" id="Q61880"/>
<dbReference type="PaxDb" id="10090-ENSMUSP00000023065"/>
<dbReference type="ProteomicsDB" id="277345"/>
<dbReference type="Antibodypedia" id="246">
    <property type="antibodies" value="418 antibodies from 34 providers"/>
</dbReference>
<dbReference type="Ensembl" id="ENSMUST00000023065.8">
    <property type="protein sequence ID" value="ENSMUSP00000023065.7"/>
    <property type="gene ID" value="ENSMUSG00000022429.12"/>
</dbReference>
<dbReference type="GeneID" id="13404"/>
<dbReference type="KEGG" id="mmu:13404"/>
<dbReference type="UCSC" id="uc007wtu.2">
    <property type="organism name" value="mouse"/>
</dbReference>
<dbReference type="AGR" id="MGI:105393"/>
<dbReference type="CTD" id="11144"/>
<dbReference type="MGI" id="MGI:105393">
    <property type="gene designation" value="Dmc1"/>
</dbReference>
<dbReference type="VEuPathDB" id="HostDB:ENSMUSG00000022429"/>
<dbReference type="eggNOG" id="KOG1434">
    <property type="taxonomic scope" value="Eukaryota"/>
</dbReference>
<dbReference type="GeneTree" id="ENSGT00760000119398"/>
<dbReference type="HOGENOM" id="CLU_041732_0_0_1"/>
<dbReference type="InParanoid" id="Q61880"/>
<dbReference type="OMA" id="ANPMKPV"/>
<dbReference type="OrthoDB" id="10251254at2759"/>
<dbReference type="PhylomeDB" id="Q61880"/>
<dbReference type="TreeFam" id="TF300698"/>
<dbReference type="Reactome" id="R-MMU-912446">
    <property type="pathway name" value="Meiotic recombination"/>
</dbReference>
<dbReference type="BioGRID-ORCS" id="13404">
    <property type="hits" value="0 hits in 113 CRISPR screens"/>
</dbReference>
<dbReference type="PRO" id="PR:Q61880"/>
<dbReference type="Proteomes" id="UP000000589">
    <property type="component" value="Chromosome 15"/>
</dbReference>
<dbReference type="RNAct" id="Q61880">
    <property type="molecule type" value="protein"/>
</dbReference>
<dbReference type="Bgee" id="ENSMUSG00000022429">
    <property type="expression patterns" value="Expressed in blastoderm cell in morula and 113 other cell types or tissues"/>
</dbReference>
<dbReference type="ExpressionAtlas" id="Q61880">
    <property type="expression patterns" value="baseline and differential"/>
</dbReference>
<dbReference type="GO" id="GO:0005694">
    <property type="term" value="C:chromosome"/>
    <property type="evidence" value="ECO:0000314"/>
    <property type="project" value="UniProtKB"/>
</dbReference>
<dbReference type="GO" id="GO:0000781">
    <property type="term" value="C:chromosome, telomeric region"/>
    <property type="evidence" value="ECO:0000314"/>
    <property type="project" value="MGI"/>
</dbReference>
<dbReference type="GO" id="GO:0000794">
    <property type="term" value="C:condensed nuclear chromosome"/>
    <property type="evidence" value="ECO:0000314"/>
    <property type="project" value="MGI"/>
</dbReference>
<dbReference type="GO" id="GO:0000800">
    <property type="term" value="C:lateral element"/>
    <property type="evidence" value="ECO:0000314"/>
    <property type="project" value="MGI"/>
</dbReference>
<dbReference type="GO" id="GO:0005654">
    <property type="term" value="C:nucleoplasm"/>
    <property type="evidence" value="ECO:0000304"/>
    <property type="project" value="Reactome"/>
</dbReference>
<dbReference type="GO" id="GO:0005634">
    <property type="term" value="C:nucleus"/>
    <property type="evidence" value="ECO:0000314"/>
    <property type="project" value="UniProtKB"/>
</dbReference>
<dbReference type="GO" id="GO:0035861">
    <property type="term" value="C:site of double-strand break"/>
    <property type="evidence" value="ECO:0000314"/>
    <property type="project" value="UniProt"/>
</dbReference>
<dbReference type="GO" id="GO:0005524">
    <property type="term" value="F:ATP binding"/>
    <property type="evidence" value="ECO:0000250"/>
    <property type="project" value="UniProtKB"/>
</dbReference>
<dbReference type="GO" id="GO:0016887">
    <property type="term" value="F:ATP hydrolysis activity"/>
    <property type="evidence" value="ECO:0007669"/>
    <property type="project" value="InterPro"/>
</dbReference>
<dbReference type="GO" id="GO:0140664">
    <property type="term" value="F:ATP-dependent DNA damage sensor activity"/>
    <property type="evidence" value="ECO:0007669"/>
    <property type="project" value="InterPro"/>
</dbReference>
<dbReference type="GO" id="GO:0000150">
    <property type="term" value="F:DNA strand exchange activity"/>
    <property type="evidence" value="ECO:0000314"/>
    <property type="project" value="UniProt"/>
</dbReference>
<dbReference type="GO" id="GO:0003690">
    <property type="term" value="F:double-stranded DNA binding"/>
    <property type="evidence" value="ECO:0000250"/>
    <property type="project" value="UniProtKB"/>
</dbReference>
<dbReference type="GO" id="GO:0042802">
    <property type="term" value="F:identical protein binding"/>
    <property type="evidence" value="ECO:0007669"/>
    <property type="project" value="Ensembl"/>
</dbReference>
<dbReference type="GO" id="GO:0003697">
    <property type="term" value="F:single-stranded DNA binding"/>
    <property type="evidence" value="ECO:0000250"/>
    <property type="project" value="UniProtKB"/>
</dbReference>
<dbReference type="GO" id="GO:1990918">
    <property type="term" value="P:double-strand break repair involved in meiotic recombination"/>
    <property type="evidence" value="ECO:0000314"/>
    <property type="project" value="UniProt"/>
</dbReference>
<dbReference type="GO" id="GO:0000724">
    <property type="term" value="P:double-strand break repair via homologous recombination"/>
    <property type="evidence" value="ECO:0000314"/>
    <property type="project" value="UniProt"/>
</dbReference>
<dbReference type="GO" id="GO:0007276">
    <property type="term" value="P:gamete generation"/>
    <property type="evidence" value="ECO:0000315"/>
    <property type="project" value="MGI"/>
</dbReference>
<dbReference type="GO" id="GO:0007129">
    <property type="term" value="P:homologous chromosome pairing at meiosis"/>
    <property type="evidence" value="ECO:0000315"/>
    <property type="project" value="MGI"/>
</dbReference>
<dbReference type="GO" id="GO:0007141">
    <property type="term" value="P:male meiosis I"/>
    <property type="evidence" value="ECO:0000315"/>
    <property type="project" value="MGI"/>
</dbReference>
<dbReference type="GO" id="GO:0001556">
    <property type="term" value="P:oocyte maturation"/>
    <property type="evidence" value="ECO:0000315"/>
    <property type="project" value="MGI"/>
</dbReference>
<dbReference type="GO" id="GO:0048477">
    <property type="term" value="P:oogenesis"/>
    <property type="evidence" value="ECO:0000315"/>
    <property type="project" value="MGI"/>
</dbReference>
<dbReference type="GO" id="GO:0001541">
    <property type="term" value="P:ovarian follicle development"/>
    <property type="evidence" value="ECO:0000315"/>
    <property type="project" value="MGI"/>
</dbReference>
<dbReference type="GO" id="GO:0007131">
    <property type="term" value="P:reciprocal meiotic recombination"/>
    <property type="evidence" value="ECO:0000314"/>
    <property type="project" value="UniProt"/>
</dbReference>
<dbReference type="GO" id="GO:0007286">
    <property type="term" value="P:spermatid development"/>
    <property type="evidence" value="ECO:0000315"/>
    <property type="project" value="MGI"/>
</dbReference>
<dbReference type="GO" id="GO:0007283">
    <property type="term" value="P:spermatogenesis"/>
    <property type="evidence" value="ECO:0000315"/>
    <property type="project" value="MGI"/>
</dbReference>
<dbReference type="CDD" id="cd19514">
    <property type="entry name" value="DMC1"/>
    <property type="match status" value="1"/>
</dbReference>
<dbReference type="FunFam" id="3.40.50.300:FF:000239">
    <property type="entry name" value="Meiotic recombination protein DMC1"/>
    <property type="match status" value="1"/>
</dbReference>
<dbReference type="FunFam" id="1.10.150.20:FF:000032">
    <property type="entry name" value="meiotic recombination protein DMC1/LIM15 homolog"/>
    <property type="match status" value="1"/>
</dbReference>
<dbReference type="Gene3D" id="1.10.150.20">
    <property type="entry name" value="5' to 3' exonuclease, C-terminal subdomain"/>
    <property type="match status" value="1"/>
</dbReference>
<dbReference type="Gene3D" id="3.40.50.300">
    <property type="entry name" value="P-loop containing nucleotide triphosphate hydrolases"/>
    <property type="match status" value="1"/>
</dbReference>
<dbReference type="InterPro" id="IPR003593">
    <property type="entry name" value="AAA+_ATPase"/>
</dbReference>
<dbReference type="InterPro" id="IPR011940">
    <property type="entry name" value="Dmc1"/>
</dbReference>
<dbReference type="InterPro" id="IPR013632">
    <property type="entry name" value="DNA_recomb/repair_Rad51_C"/>
</dbReference>
<dbReference type="InterPro" id="IPR016467">
    <property type="entry name" value="DNA_recomb/repair_RecA-like"/>
</dbReference>
<dbReference type="InterPro" id="IPR010995">
    <property type="entry name" value="DNA_repair_Rad51/TF_NusA_a-hlx"/>
</dbReference>
<dbReference type="InterPro" id="IPR027417">
    <property type="entry name" value="P-loop_NTPase"/>
</dbReference>
<dbReference type="InterPro" id="IPR020588">
    <property type="entry name" value="RecA_ATP-bd"/>
</dbReference>
<dbReference type="InterPro" id="IPR020587">
    <property type="entry name" value="RecA_monomer-monomer_interface"/>
</dbReference>
<dbReference type="NCBIfam" id="NF003301">
    <property type="entry name" value="PRK04301.1"/>
    <property type="match status" value="1"/>
</dbReference>
<dbReference type="NCBIfam" id="TIGR02238">
    <property type="entry name" value="recomb_DMC1"/>
    <property type="match status" value="1"/>
</dbReference>
<dbReference type="PANTHER" id="PTHR22942:SF30">
    <property type="entry name" value="MEIOTIC RECOMBINATION PROTEIN DMC1_LIM15 HOMOLOG"/>
    <property type="match status" value="1"/>
</dbReference>
<dbReference type="PANTHER" id="PTHR22942">
    <property type="entry name" value="RECA/RAD51/RADA DNA STRAND-PAIRING FAMILY MEMBER"/>
    <property type="match status" value="1"/>
</dbReference>
<dbReference type="Pfam" id="PF14520">
    <property type="entry name" value="HHH_5"/>
    <property type="match status" value="1"/>
</dbReference>
<dbReference type="Pfam" id="PF08423">
    <property type="entry name" value="Rad51"/>
    <property type="match status" value="1"/>
</dbReference>
<dbReference type="PIRSF" id="PIRSF005856">
    <property type="entry name" value="Rad51"/>
    <property type="match status" value="1"/>
</dbReference>
<dbReference type="SMART" id="SM00382">
    <property type="entry name" value="AAA"/>
    <property type="match status" value="1"/>
</dbReference>
<dbReference type="SUPFAM" id="SSF52540">
    <property type="entry name" value="P-loop containing nucleoside triphosphate hydrolases"/>
    <property type="match status" value="1"/>
</dbReference>
<dbReference type="SUPFAM" id="SSF47794">
    <property type="entry name" value="Rad51 N-terminal domain-like"/>
    <property type="match status" value="1"/>
</dbReference>
<dbReference type="PROSITE" id="PS50162">
    <property type="entry name" value="RECA_2"/>
    <property type="match status" value="1"/>
</dbReference>
<dbReference type="PROSITE" id="PS50163">
    <property type="entry name" value="RECA_3"/>
    <property type="match status" value="1"/>
</dbReference>
<name>DMC1_MOUSE</name>
<evidence type="ECO:0000250" key="1">
    <source>
        <dbReference type="UniProtKB" id="Q14565"/>
    </source>
</evidence>
<evidence type="ECO:0000269" key="2">
    <source>
    </source>
</evidence>
<evidence type="ECO:0000269" key="3">
    <source>
    </source>
</evidence>
<evidence type="ECO:0000269" key="4">
    <source>
    </source>
</evidence>
<evidence type="ECO:0000269" key="5">
    <source>
    </source>
</evidence>
<evidence type="ECO:0000269" key="6">
    <source>
    </source>
</evidence>
<evidence type="ECO:0000269" key="7">
    <source>
    </source>
</evidence>
<evidence type="ECO:0000269" key="8">
    <source>
    </source>
</evidence>
<evidence type="ECO:0000269" key="9">
    <source>
    </source>
</evidence>
<evidence type="ECO:0000269" key="10">
    <source>
    </source>
</evidence>
<evidence type="ECO:0000305" key="11"/>
<evidence type="ECO:0000312" key="12">
    <source>
        <dbReference type="MGI" id="MGI:105393"/>
    </source>
</evidence>
<proteinExistence type="evidence at protein level"/>
<reference key="1">
    <citation type="journal article" date="1995" name="DNA Res.">
        <title>Characterization of a mouse recA-like gene specifically expressed in testis.</title>
        <authorList>
            <person name="Sato S."/>
            <person name="Kobayashi T."/>
            <person name="Hotta Y."/>
            <person name="Tabata S."/>
        </authorList>
    </citation>
    <scope>NUCLEOTIDE SEQUENCE [MRNA]</scope>
    <scope>TISSUE SPECIFICITY</scope>
    <source>
        <tissue>Testis</tissue>
    </source>
</reference>
<reference key="2">
    <citation type="journal article" date="1996" name="Nucleic Acids Res.">
        <title>The mouse and human homologs of DMC1, the yeast meiosis-specific homologous recombination gene, have a common unique form of exon-skipped transcript in meiosis.</title>
        <authorList>
            <person name="Habu T."/>
            <person name="Taki T."/>
            <person name="West A."/>
            <person name="Nishimune Y."/>
            <person name="Morita T."/>
        </authorList>
    </citation>
    <scope>NUCLEOTIDE SEQUENCE [MRNA]</scope>
    <source>
        <strain>129/Sv</strain>
        <tissue>Testis</tissue>
    </source>
</reference>
<reference key="3">
    <citation type="journal article" date="2005" name="Nat. Struct. Mol. Biol.">
        <title>The Hop2 and Mnd1 proteins act in concert with Rad51 and Dmc1 in meiotic recombination.</title>
        <authorList>
            <person name="Petukhova G.V."/>
            <person name="Pezza R.J."/>
            <person name="Vanevski F."/>
            <person name="Ploquin M."/>
            <person name="Masson J.-Y."/>
            <person name="Camerini-Otero R.D."/>
        </authorList>
    </citation>
    <scope>INTERACTION WITH MND1/PSMC3IP HETERODIMER</scope>
</reference>
<reference key="4">
    <citation type="journal article" date="2007" name="Genes Dev.">
        <title>Hop2/Mnd1 acts on two critical steps in Dmc1-promoted homologous pairing.</title>
        <authorList>
            <person name="Pezza R.J."/>
            <person name="Voloshin O.N."/>
            <person name="Vanevski F."/>
            <person name="Camerini-Otero R.D."/>
        </authorList>
    </citation>
    <scope>FUNCTION</scope>
</reference>
<reference key="5">
    <citation type="journal article" date="2010" name="Cell">
        <title>A tissue-specific atlas of mouse protein phosphorylation and expression.</title>
        <authorList>
            <person name="Huttlin E.L."/>
            <person name="Jedrychowski M.P."/>
            <person name="Elias J.E."/>
            <person name="Goswami T."/>
            <person name="Rad R."/>
            <person name="Beausoleil S.A."/>
            <person name="Villen J."/>
            <person name="Haas W."/>
            <person name="Sowa M.E."/>
            <person name="Gygi S.P."/>
        </authorList>
    </citation>
    <scope>IDENTIFICATION BY MASS SPECTROMETRY [LARGE SCALE ANALYSIS]</scope>
    <source>
        <tissue>Testis</tissue>
    </source>
</reference>
<reference key="6">
    <citation type="journal article" date="2011" name="Proc. Natl. Acad. Sci. U.S.A.">
        <title>Molecular basis for enhancement of the meiotic DMC1 recombinase by RAD51 associated protein 1 (RAD51AP1).</title>
        <authorList>
            <person name="Dray E."/>
            <person name="Dunlop M.H."/>
            <person name="Kauppi L."/>
            <person name="San Filippo J."/>
            <person name="Wiese C."/>
            <person name="Tsai M.S."/>
            <person name="Begovic S."/>
            <person name="Schild D."/>
            <person name="Jasin M."/>
            <person name="Keeney S."/>
            <person name="Sung P."/>
        </authorList>
    </citation>
    <scope>SUBCELLULAR LOCATION</scope>
</reference>
<reference key="7">
    <citation type="journal article" date="2012" name="Genes Dev.">
        <title>Meiotic DNA double-strand breaks and chromosome asynapsis in mice are monitored by distinct HORMAD2-independent and -dependent mechanisms.</title>
        <authorList>
            <person name="Wojtasz L."/>
            <person name="Cloutier J.M."/>
            <person name="Baumann M."/>
            <person name="Daniel K."/>
            <person name="Varga J."/>
            <person name="Fu J."/>
            <person name="Anastassiadis K."/>
            <person name="Stewart A.F."/>
            <person name="Remenyi A."/>
            <person name="Turner J.M."/>
            <person name="Toth A."/>
        </authorList>
    </citation>
    <scope>SUBCELLULAR LOCATION</scope>
</reference>
<reference key="8">
    <citation type="journal article" date="2019" name="Nat. Commun.">
        <title>A meiosis-specific BRCA2 binding protein recruits recombinases to DNA double-strand breaks to ensure homologous recombination.</title>
        <authorList>
            <person name="Zhang J."/>
            <person name="Fujiwara Y."/>
            <person name="Yamamoto S."/>
            <person name="Shibuya H."/>
        </authorList>
    </citation>
    <scope>SUBCELLULAR LOCATION</scope>
    <scope>DEVELOPMENTAL STAGE</scope>
    <scope>TISSUE SPECIFICITY</scope>
</reference>
<reference key="9">
    <citation type="journal article" date="2019" name="Nucleic Acids Res.">
        <title>SCRE serves as a unique synaptonemal complex fastener and is essential for progression of meiosis prophase I in mice.</title>
        <authorList>
            <person name="Liu H."/>
            <person name="Huang T."/>
            <person name="Li M."/>
            <person name="Li M."/>
            <person name="Zhang C."/>
            <person name="Jiang J."/>
            <person name="Yu X."/>
            <person name="Yin Y."/>
            <person name="Zhang F."/>
            <person name="Lu G."/>
            <person name="Luo M.C."/>
            <person name="Zhang L.R."/>
            <person name="Li J."/>
            <person name="Liu K."/>
            <person name="Chen Z.J."/>
        </authorList>
    </citation>
    <scope>SUBCELLULAR LOCATION</scope>
</reference>
<reference key="10">
    <citation type="journal article" date="2019" name="Sci. Adv.">
        <title>SPO16 binds SHOC1 to promote homologous recombination and crossing-over in meiotic prophase I.</title>
        <authorList>
            <person name="Zhang Q."/>
            <person name="Ji S.Y."/>
            <person name="Busayavalasa K."/>
            <person name="Yu C."/>
        </authorList>
    </citation>
    <scope>SUBCELLULAR LOCATION</scope>
</reference>
<reference key="11">
    <citation type="journal article" date="2020" name="Nucleic Acids Res.">
        <title>MEIOK21: a new component of meiotic recombination bridges required for spermatogenesis.</title>
        <authorList>
            <person name="Shang Y."/>
            <person name="Huang T."/>
            <person name="Liu H."/>
            <person name="Liu Y."/>
            <person name="Liang H."/>
            <person name="Yu X."/>
            <person name="Li M."/>
            <person name="Zhai B."/>
            <person name="Yang X."/>
            <person name="Wei Y."/>
            <person name="Wang G."/>
            <person name="Chen Z."/>
            <person name="Wang S."/>
            <person name="Zhang L."/>
        </authorList>
    </citation>
    <scope>SUBCELLULAR LOCATION</scope>
</reference>
<accession>Q61880</accession>
<gene>
    <name evidence="12" type="primary">Dmc1</name>
    <name type="synonym">Dmc1h</name>
    <name type="synonym">Lim15</name>
</gene>
<sequence>MKEDQVVQEESGFQDDEESLFQDIDLLQKHGINMADIKKLKSVGICTIKGIQMTTRRALCNVKGLSEAKVEKIKEAANKLIEPGFLTAFQYSERRKMVFHITTGSQEFDKLLGGGIESMAITEAFGEFRTGKTQLSHTLCVTAQLPGTGGYSGGKIIFIDTENTFRPDRLRDIADRFNVDHEAVLDNVLYARAYTSEHQMELLDYVAAKFHEEAGIFKLLIIDSIMALFRVDFSGRGELAERQQKLAQMLSRLQKISEEYNVAVFVTNQMTADPGATMTFQADPKKPIGGHILAHASTTRISLRKGRGELRIAKIYDSPEMPENEATFAITAGGIGDAKE</sequence>
<keyword id="KW-0067">ATP-binding</keyword>
<keyword id="KW-0131">Cell cycle</keyword>
<keyword id="KW-0158">Chromosome</keyword>
<keyword id="KW-0238">DNA-binding</keyword>
<keyword id="KW-0469">Meiosis</keyword>
<keyword id="KW-0547">Nucleotide-binding</keyword>
<keyword id="KW-0539">Nucleus</keyword>
<keyword id="KW-1185">Reference proteome</keyword>
<organism>
    <name type="scientific">Mus musculus</name>
    <name type="common">Mouse</name>
    <dbReference type="NCBI Taxonomy" id="10090"/>
    <lineage>
        <taxon>Eukaryota</taxon>
        <taxon>Metazoa</taxon>
        <taxon>Chordata</taxon>
        <taxon>Craniata</taxon>
        <taxon>Vertebrata</taxon>
        <taxon>Euteleostomi</taxon>
        <taxon>Mammalia</taxon>
        <taxon>Eutheria</taxon>
        <taxon>Euarchontoglires</taxon>
        <taxon>Glires</taxon>
        <taxon>Rodentia</taxon>
        <taxon>Myomorpha</taxon>
        <taxon>Muroidea</taxon>
        <taxon>Muridae</taxon>
        <taxon>Murinae</taxon>
        <taxon>Mus</taxon>
        <taxon>Mus</taxon>
    </lineage>
</organism>